<feature type="chain" id="PRO_0000368639" description="ATP synthase subunit b">
    <location>
        <begin position="1"/>
        <end position="176"/>
    </location>
</feature>
<feature type="transmembrane region" description="Helical" evidence="1">
    <location>
        <begin position="7"/>
        <end position="27"/>
    </location>
</feature>
<feature type="region of interest" description="Disordered" evidence="2">
    <location>
        <begin position="75"/>
        <end position="94"/>
    </location>
</feature>
<feature type="compositionally biased region" description="Basic and acidic residues" evidence="2">
    <location>
        <begin position="85"/>
        <end position="94"/>
    </location>
</feature>
<sequence>MLTTIAIQIPDGSAIFVLLTFILLMFILKKLAWGPITKIMDARANQINDDLDSAAKSKNEAKKLQTVADTNLKESQSQATALMENARKSSEEQSKKIVDLAQAHADSINRQAQIDARQIKDDALDSAKDEIADLSVSIASRIIGKEITASKHKALIDDFISELEKQQENSPVKEKS</sequence>
<reference key="1">
    <citation type="journal article" date="2006" name="Proc. Natl. Acad. Sci. U.S.A.">
        <title>Comparative genomics of the lactic acid bacteria.</title>
        <authorList>
            <person name="Makarova K.S."/>
            <person name="Slesarev A."/>
            <person name="Wolf Y.I."/>
            <person name="Sorokin A."/>
            <person name="Mirkin B."/>
            <person name="Koonin E.V."/>
            <person name="Pavlov A."/>
            <person name="Pavlova N."/>
            <person name="Karamychev V."/>
            <person name="Polouchine N."/>
            <person name="Shakhova V."/>
            <person name="Grigoriev I."/>
            <person name="Lou Y."/>
            <person name="Rohksar D."/>
            <person name="Lucas S."/>
            <person name="Huang K."/>
            <person name="Goodstein D.M."/>
            <person name="Hawkins T."/>
            <person name="Plengvidhya V."/>
            <person name="Welker D."/>
            <person name="Hughes J."/>
            <person name="Goh Y."/>
            <person name="Benson A."/>
            <person name="Baldwin K."/>
            <person name="Lee J.-H."/>
            <person name="Diaz-Muniz I."/>
            <person name="Dosti B."/>
            <person name="Smeianov V."/>
            <person name="Wechter W."/>
            <person name="Barabote R."/>
            <person name="Lorca G."/>
            <person name="Altermann E."/>
            <person name="Barrangou R."/>
            <person name="Ganesan B."/>
            <person name="Xie Y."/>
            <person name="Rawsthorne H."/>
            <person name="Tamir D."/>
            <person name="Parker C."/>
            <person name="Breidt F."/>
            <person name="Broadbent J.R."/>
            <person name="Hutkins R."/>
            <person name="O'Sullivan D."/>
            <person name="Steele J."/>
            <person name="Unlu G."/>
            <person name="Saier M.H. Jr."/>
            <person name="Klaenhammer T."/>
            <person name="Richardson P."/>
            <person name="Kozyavkin S."/>
            <person name="Weimer B.C."/>
            <person name="Mills D.A."/>
        </authorList>
    </citation>
    <scope>NUCLEOTIDE SEQUENCE [LARGE SCALE GENOMIC DNA]</scope>
    <source>
        <strain>ATCC BAA-331 / PSU-1</strain>
    </source>
</reference>
<accession>Q04G24</accession>
<comment type="function">
    <text evidence="1">F(1)F(0) ATP synthase produces ATP from ADP in the presence of a proton or sodium gradient. F-type ATPases consist of two structural domains, F(1) containing the extramembraneous catalytic core and F(0) containing the membrane proton channel, linked together by a central stalk and a peripheral stalk. During catalysis, ATP synthesis in the catalytic domain of F(1) is coupled via a rotary mechanism of the central stalk subunits to proton translocation.</text>
</comment>
<comment type="function">
    <text evidence="1">Component of the F(0) channel, it forms part of the peripheral stalk, linking F(1) to F(0).</text>
</comment>
<comment type="subunit">
    <text evidence="1">F-type ATPases have 2 components, F(1) - the catalytic core - and F(0) - the membrane proton channel. F(1) has five subunits: alpha(3), beta(3), gamma(1), delta(1), epsilon(1). F(0) has three main subunits: a(1), b(2) and c(10-14). The alpha and beta chains form an alternating ring which encloses part of the gamma chain. F(1) is attached to F(0) by a central stalk formed by the gamma and epsilon chains, while a peripheral stalk is formed by the delta and b chains.</text>
</comment>
<comment type="subcellular location">
    <subcellularLocation>
        <location evidence="1">Cell membrane</location>
        <topology evidence="1">Single-pass membrane protein</topology>
    </subcellularLocation>
</comment>
<comment type="similarity">
    <text evidence="1">Belongs to the ATPase B chain family.</text>
</comment>
<protein>
    <recommendedName>
        <fullName evidence="1">ATP synthase subunit b</fullName>
    </recommendedName>
    <alternativeName>
        <fullName evidence="1">ATP synthase F(0) sector subunit b</fullName>
    </alternativeName>
    <alternativeName>
        <fullName evidence="1">ATPase subunit I</fullName>
    </alternativeName>
    <alternativeName>
        <fullName evidence="1">F-type ATPase subunit b</fullName>
        <shortName evidence="1">F-ATPase subunit b</shortName>
    </alternativeName>
</protein>
<proteinExistence type="inferred from homology"/>
<keyword id="KW-0066">ATP synthesis</keyword>
<keyword id="KW-1003">Cell membrane</keyword>
<keyword id="KW-0138">CF(0)</keyword>
<keyword id="KW-0375">Hydrogen ion transport</keyword>
<keyword id="KW-0406">Ion transport</keyword>
<keyword id="KW-0472">Membrane</keyword>
<keyword id="KW-1185">Reference proteome</keyword>
<keyword id="KW-0812">Transmembrane</keyword>
<keyword id="KW-1133">Transmembrane helix</keyword>
<keyword id="KW-0813">Transport</keyword>
<dbReference type="EMBL" id="CP000411">
    <property type="protein sequence ID" value="ABJ56598.1"/>
    <property type="molecule type" value="Genomic_DNA"/>
</dbReference>
<dbReference type="RefSeq" id="WP_011677535.1">
    <property type="nucleotide sequence ID" value="NC_008528.1"/>
</dbReference>
<dbReference type="SMR" id="Q04G24"/>
<dbReference type="STRING" id="203123.OEOE_0661"/>
<dbReference type="KEGG" id="ooe:OEOE_0661"/>
<dbReference type="PATRIC" id="fig|203123.7.peg.669"/>
<dbReference type="eggNOG" id="COG0711">
    <property type="taxonomic scope" value="Bacteria"/>
</dbReference>
<dbReference type="HOGENOM" id="CLU_079215_4_2_9"/>
<dbReference type="Proteomes" id="UP000000774">
    <property type="component" value="Chromosome"/>
</dbReference>
<dbReference type="GO" id="GO:0005886">
    <property type="term" value="C:plasma membrane"/>
    <property type="evidence" value="ECO:0007669"/>
    <property type="project" value="UniProtKB-SubCell"/>
</dbReference>
<dbReference type="GO" id="GO:0045259">
    <property type="term" value="C:proton-transporting ATP synthase complex"/>
    <property type="evidence" value="ECO:0007669"/>
    <property type="project" value="UniProtKB-KW"/>
</dbReference>
<dbReference type="GO" id="GO:0046933">
    <property type="term" value="F:proton-transporting ATP synthase activity, rotational mechanism"/>
    <property type="evidence" value="ECO:0007669"/>
    <property type="project" value="UniProtKB-UniRule"/>
</dbReference>
<dbReference type="GO" id="GO:0046961">
    <property type="term" value="F:proton-transporting ATPase activity, rotational mechanism"/>
    <property type="evidence" value="ECO:0007669"/>
    <property type="project" value="TreeGrafter"/>
</dbReference>
<dbReference type="CDD" id="cd06503">
    <property type="entry name" value="ATP-synt_Fo_b"/>
    <property type="match status" value="1"/>
</dbReference>
<dbReference type="Gene3D" id="6.10.250.1580">
    <property type="match status" value="1"/>
</dbReference>
<dbReference type="HAMAP" id="MF_01398">
    <property type="entry name" value="ATP_synth_b_bprime"/>
    <property type="match status" value="1"/>
</dbReference>
<dbReference type="InterPro" id="IPR002146">
    <property type="entry name" value="ATP_synth_b/b'su_bac/chlpt"/>
</dbReference>
<dbReference type="InterPro" id="IPR005864">
    <property type="entry name" value="ATP_synth_F0_bsu_bac"/>
</dbReference>
<dbReference type="InterPro" id="IPR050059">
    <property type="entry name" value="ATP_synthase_B_chain"/>
</dbReference>
<dbReference type="NCBIfam" id="TIGR01144">
    <property type="entry name" value="ATP_synt_b"/>
    <property type="match status" value="1"/>
</dbReference>
<dbReference type="PANTHER" id="PTHR33445:SF1">
    <property type="entry name" value="ATP SYNTHASE SUBUNIT B"/>
    <property type="match status" value="1"/>
</dbReference>
<dbReference type="PANTHER" id="PTHR33445">
    <property type="entry name" value="ATP SYNTHASE SUBUNIT B', CHLOROPLASTIC"/>
    <property type="match status" value="1"/>
</dbReference>
<dbReference type="Pfam" id="PF00430">
    <property type="entry name" value="ATP-synt_B"/>
    <property type="match status" value="1"/>
</dbReference>
<gene>
    <name evidence="1" type="primary">atpF</name>
    <name type="ordered locus">OEOE_0661</name>
</gene>
<evidence type="ECO:0000255" key="1">
    <source>
        <dbReference type="HAMAP-Rule" id="MF_01398"/>
    </source>
</evidence>
<evidence type="ECO:0000256" key="2">
    <source>
        <dbReference type="SAM" id="MobiDB-lite"/>
    </source>
</evidence>
<name>ATPF_OENOB</name>
<organism>
    <name type="scientific">Oenococcus oeni (strain ATCC BAA-331 / PSU-1)</name>
    <dbReference type="NCBI Taxonomy" id="203123"/>
    <lineage>
        <taxon>Bacteria</taxon>
        <taxon>Bacillati</taxon>
        <taxon>Bacillota</taxon>
        <taxon>Bacilli</taxon>
        <taxon>Lactobacillales</taxon>
        <taxon>Lactobacillaceae</taxon>
        <taxon>Oenococcus</taxon>
    </lineage>
</organism>